<protein>
    <recommendedName>
        <fullName evidence="1">Histidinol-phosphate aminotransferase</fullName>
        <ecNumber evidence="1">2.6.1.9</ecNumber>
    </recommendedName>
    <alternativeName>
        <fullName evidence="1">Imidazole acetol-phosphate transaminase</fullName>
    </alternativeName>
</protein>
<sequence>MNTFDINTITRENVKSLKPYSSARDEFEDFDTAEMIFLDANENPFQNGVNRYPDPQQNSVKAILAKNNNTKQSQILLGNGSDEVLDLLFRAFCEPNKDNIISLPPTYGMYGVLANINAVENREILLTTDFQPQVEKILEAVDENTKIIFLCSPNNPTGNSFSDESVVKLLQNFKGLVVIDEAYIDFSEKESWLTEIDEYPNLVITQTLSKAYGLAGIRLGICYASEAVISVLNKIKPPYNVNELTQQRAKERLKDLDKIKQEIASIIEQREELLKVLLEVNFVEKVYPTEANFILAKVDDANKRYNQLIEKGIVIRNRTTQPLCENCLRFTIGTKEENAVVIKELKLLN</sequence>
<organism>
    <name type="scientific">Flavobacterium johnsoniae (strain ATCC 17061 / DSM 2064 / JCM 8514 / BCRC 14874 / CCUG 350202 / NBRC 14942 / NCIMB 11054 / UW101)</name>
    <name type="common">Cytophaga johnsonae</name>
    <dbReference type="NCBI Taxonomy" id="376686"/>
    <lineage>
        <taxon>Bacteria</taxon>
        <taxon>Pseudomonadati</taxon>
        <taxon>Bacteroidota</taxon>
        <taxon>Flavobacteriia</taxon>
        <taxon>Flavobacteriales</taxon>
        <taxon>Flavobacteriaceae</taxon>
        <taxon>Flavobacterium</taxon>
    </lineage>
</organism>
<reference key="1">
    <citation type="journal article" date="2009" name="Appl. Environ. Microbiol.">
        <title>Novel features of the polysaccharide-digesting gliding bacterium Flavobacterium johnsoniae as revealed by genome sequence analysis.</title>
        <authorList>
            <person name="McBride M.J."/>
            <person name="Xie G."/>
            <person name="Martens E.C."/>
            <person name="Lapidus A."/>
            <person name="Henrissat B."/>
            <person name="Rhodes R.G."/>
            <person name="Goltsman E."/>
            <person name="Wang W."/>
            <person name="Xu J."/>
            <person name="Hunnicutt D.W."/>
            <person name="Staroscik A.M."/>
            <person name="Hoover T.R."/>
            <person name="Cheng Y.Q."/>
            <person name="Stein J.L."/>
        </authorList>
    </citation>
    <scope>NUCLEOTIDE SEQUENCE [LARGE SCALE GENOMIC DNA]</scope>
    <source>
        <strain>ATCC 17061 / DSM 2064 / JCM 8514 / BCRC 14874 / CCUG 350202 / NBRC 14942 / NCIMB 11054 / UW101</strain>
    </source>
</reference>
<proteinExistence type="inferred from homology"/>
<comment type="catalytic activity">
    <reaction evidence="1">
        <text>L-histidinol phosphate + 2-oxoglutarate = 3-(imidazol-4-yl)-2-oxopropyl phosphate + L-glutamate</text>
        <dbReference type="Rhea" id="RHEA:23744"/>
        <dbReference type="ChEBI" id="CHEBI:16810"/>
        <dbReference type="ChEBI" id="CHEBI:29985"/>
        <dbReference type="ChEBI" id="CHEBI:57766"/>
        <dbReference type="ChEBI" id="CHEBI:57980"/>
        <dbReference type="EC" id="2.6.1.9"/>
    </reaction>
</comment>
<comment type="cofactor">
    <cofactor evidence="1">
        <name>pyridoxal 5'-phosphate</name>
        <dbReference type="ChEBI" id="CHEBI:597326"/>
    </cofactor>
</comment>
<comment type="pathway">
    <text evidence="1">Amino-acid biosynthesis; L-histidine biosynthesis; L-histidine from 5-phospho-alpha-D-ribose 1-diphosphate: step 7/9.</text>
</comment>
<comment type="subunit">
    <text evidence="1">Homodimer.</text>
</comment>
<comment type="similarity">
    <text evidence="1">Belongs to the class-II pyridoxal-phosphate-dependent aminotransferase family. Histidinol-phosphate aminotransferase subfamily.</text>
</comment>
<dbReference type="EC" id="2.6.1.9" evidence="1"/>
<dbReference type="EMBL" id="CP000685">
    <property type="protein sequence ID" value="ABQ05897.1"/>
    <property type="molecule type" value="Genomic_DNA"/>
</dbReference>
<dbReference type="RefSeq" id="WP_012024935.1">
    <property type="nucleotide sequence ID" value="NC_009441.1"/>
</dbReference>
<dbReference type="SMR" id="A5FFY0"/>
<dbReference type="STRING" id="376686.Fjoh_2876"/>
<dbReference type="KEGG" id="fjo:Fjoh_2876"/>
<dbReference type="eggNOG" id="COG0079">
    <property type="taxonomic scope" value="Bacteria"/>
</dbReference>
<dbReference type="HOGENOM" id="CLU_017584_3_1_10"/>
<dbReference type="OrthoDB" id="9813612at2"/>
<dbReference type="UniPathway" id="UPA00031">
    <property type="reaction ID" value="UER00012"/>
</dbReference>
<dbReference type="Proteomes" id="UP000006694">
    <property type="component" value="Chromosome"/>
</dbReference>
<dbReference type="GO" id="GO:0004400">
    <property type="term" value="F:histidinol-phosphate transaminase activity"/>
    <property type="evidence" value="ECO:0007669"/>
    <property type="project" value="UniProtKB-UniRule"/>
</dbReference>
<dbReference type="GO" id="GO:0030170">
    <property type="term" value="F:pyridoxal phosphate binding"/>
    <property type="evidence" value="ECO:0007669"/>
    <property type="project" value="InterPro"/>
</dbReference>
<dbReference type="GO" id="GO:0000105">
    <property type="term" value="P:L-histidine biosynthetic process"/>
    <property type="evidence" value="ECO:0007669"/>
    <property type="project" value="UniProtKB-UniRule"/>
</dbReference>
<dbReference type="CDD" id="cd00609">
    <property type="entry name" value="AAT_like"/>
    <property type="match status" value="1"/>
</dbReference>
<dbReference type="Gene3D" id="3.90.1150.10">
    <property type="entry name" value="Aspartate Aminotransferase, domain 1"/>
    <property type="match status" value="1"/>
</dbReference>
<dbReference type="Gene3D" id="3.40.640.10">
    <property type="entry name" value="Type I PLP-dependent aspartate aminotransferase-like (Major domain)"/>
    <property type="match status" value="1"/>
</dbReference>
<dbReference type="HAMAP" id="MF_01023">
    <property type="entry name" value="HisC_aminotrans_2"/>
    <property type="match status" value="1"/>
</dbReference>
<dbReference type="InterPro" id="IPR001917">
    <property type="entry name" value="Aminotrans_II_pyridoxalP_BS"/>
</dbReference>
<dbReference type="InterPro" id="IPR004839">
    <property type="entry name" value="Aminotransferase_I/II_large"/>
</dbReference>
<dbReference type="InterPro" id="IPR005861">
    <property type="entry name" value="HisP_aminotrans"/>
</dbReference>
<dbReference type="InterPro" id="IPR015424">
    <property type="entry name" value="PyrdxlP-dep_Trfase"/>
</dbReference>
<dbReference type="InterPro" id="IPR015421">
    <property type="entry name" value="PyrdxlP-dep_Trfase_major"/>
</dbReference>
<dbReference type="InterPro" id="IPR015422">
    <property type="entry name" value="PyrdxlP-dep_Trfase_small"/>
</dbReference>
<dbReference type="NCBIfam" id="TIGR01141">
    <property type="entry name" value="hisC"/>
    <property type="match status" value="1"/>
</dbReference>
<dbReference type="PANTHER" id="PTHR42885:SF2">
    <property type="entry name" value="HISTIDINOL-PHOSPHATE AMINOTRANSFERASE"/>
    <property type="match status" value="1"/>
</dbReference>
<dbReference type="PANTHER" id="PTHR42885">
    <property type="entry name" value="HISTIDINOL-PHOSPHATE AMINOTRANSFERASE-RELATED"/>
    <property type="match status" value="1"/>
</dbReference>
<dbReference type="Pfam" id="PF00155">
    <property type="entry name" value="Aminotran_1_2"/>
    <property type="match status" value="1"/>
</dbReference>
<dbReference type="SUPFAM" id="SSF53383">
    <property type="entry name" value="PLP-dependent transferases"/>
    <property type="match status" value="1"/>
</dbReference>
<dbReference type="PROSITE" id="PS00599">
    <property type="entry name" value="AA_TRANSFER_CLASS_2"/>
    <property type="match status" value="1"/>
</dbReference>
<keyword id="KW-0028">Amino-acid biosynthesis</keyword>
<keyword id="KW-0032">Aminotransferase</keyword>
<keyword id="KW-0368">Histidine biosynthesis</keyword>
<keyword id="KW-0663">Pyridoxal phosphate</keyword>
<keyword id="KW-0808">Transferase</keyword>
<name>HIS8_FLAJ1</name>
<accession>A5FFY0</accession>
<evidence type="ECO:0000255" key="1">
    <source>
        <dbReference type="HAMAP-Rule" id="MF_01023"/>
    </source>
</evidence>
<gene>
    <name evidence="1" type="primary">hisC</name>
    <name type="ordered locus">Fjoh_2876</name>
</gene>
<feature type="chain" id="PRO_1000084193" description="Histidinol-phosphate aminotransferase">
    <location>
        <begin position="1"/>
        <end position="349"/>
    </location>
</feature>
<feature type="modified residue" description="N6-(pyridoxal phosphate)lysine" evidence="1">
    <location>
        <position position="210"/>
    </location>
</feature>